<comment type="function">
    <text evidence="1">May be involved in the metabolism of insect hormones and in the breakdown of synthetic insecticides.</text>
</comment>
<comment type="cofactor">
    <cofactor evidence="1">
        <name>heme</name>
        <dbReference type="ChEBI" id="CHEBI:30413"/>
    </cofactor>
</comment>
<comment type="subcellular location">
    <subcellularLocation>
        <location evidence="2">Endoplasmic reticulum membrane</location>
        <topology evidence="2">Peripheral membrane protein</topology>
    </subcellularLocation>
    <subcellularLocation>
        <location evidence="2">Microsome membrane</location>
        <topology evidence="2">Peripheral membrane protein</topology>
    </subcellularLocation>
</comment>
<comment type="similarity">
    <text evidence="2">Belongs to the cytochrome P450 family.</text>
</comment>
<feature type="chain" id="PRO_0000051838" description="Probable cytochrome P450 4d20">
    <location>
        <begin position="1"/>
        <end position="510"/>
    </location>
</feature>
<feature type="binding site" description="axial binding residue" evidence="1">
    <location>
        <position position="455"/>
    </location>
    <ligand>
        <name>heme</name>
        <dbReference type="ChEBI" id="CHEBI:30413"/>
    </ligand>
    <ligandPart>
        <name>Fe</name>
        <dbReference type="ChEBI" id="CHEBI:18248"/>
    </ligandPart>
</feature>
<sequence>MWLTLITGALILLLTWDFGRKRQRVLAFEKSAIPGPISIPILGCGLQALHLGAENIIGWVGEKFDKYGKTFRFWILGESLIYTKDLQYFETILSSTTLLEKGQLYEYLRPFLNDGLLVSTGRKWHARRKIFTHAFHFKVLEHYVEIMDRHSSVMVDNLRKVADGKTAVDMLKYVSLAALDVITEAAMGVQVNAQNDPDFPYIKALKSVVYIQPDRMFRFSRRYNWLFPLAAPLLHRQLLSDIRVMHDFTDKVISERRETVRRAKADGTYRPLSLGDAEIGSKSQMALLDILLQSSINNQPLSDADIREEVDTFMFEGDDTTSSGVSHALYAIARHPEVQQRIFEELQRVLGPDASAPVTQAQLQDLKYLDCVIKETMRLYPPVPAIGRHAQKELEIGDKTIPANTSIYLVLYYAHRDANYFPDPLSFRPERFLEDQEQGHNTFAYVPFSAGPKNCIGQKFAVLEMKVLISKVLRFYELLPLGEELKPMLNFILRSASGINVGLRPRKALR</sequence>
<keyword id="KW-0256">Endoplasmic reticulum</keyword>
<keyword id="KW-0349">Heme</keyword>
<keyword id="KW-0408">Iron</keyword>
<keyword id="KW-0472">Membrane</keyword>
<keyword id="KW-0479">Metal-binding</keyword>
<keyword id="KW-0492">Microsome</keyword>
<keyword id="KW-0503">Monooxygenase</keyword>
<keyword id="KW-0560">Oxidoreductase</keyword>
<keyword id="KW-1185">Reference proteome</keyword>
<proteinExistence type="inferred from homology"/>
<name>C4D20_DROME</name>
<gene>
    <name type="primary">Cyp4d20</name>
    <name type="ORF">CG16761</name>
</gene>
<organism>
    <name type="scientific">Drosophila melanogaster</name>
    <name type="common">Fruit fly</name>
    <dbReference type="NCBI Taxonomy" id="7227"/>
    <lineage>
        <taxon>Eukaryota</taxon>
        <taxon>Metazoa</taxon>
        <taxon>Ecdysozoa</taxon>
        <taxon>Arthropoda</taxon>
        <taxon>Hexapoda</taxon>
        <taxon>Insecta</taxon>
        <taxon>Pterygota</taxon>
        <taxon>Neoptera</taxon>
        <taxon>Endopterygota</taxon>
        <taxon>Diptera</taxon>
        <taxon>Brachycera</taxon>
        <taxon>Muscomorpha</taxon>
        <taxon>Ephydroidea</taxon>
        <taxon>Drosophilidae</taxon>
        <taxon>Drosophila</taxon>
        <taxon>Sophophora</taxon>
    </lineage>
</organism>
<protein>
    <recommendedName>
        <fullName>Probable cytochrome P450 4d20</fullName>
        <ecNumber>1.14.-.-</ecNumber>
    </recommendedName>
    <alternativeName>
        <fullName>CYPIVD20</fullName>
    </alternativeName>
</protein>
<dbReference type="EC" id="1.14.-.-"/>
<dbReference type="EMBL" id="AE014296">
    <property type="protein sequence ID" value="AAF47649.1"/>
    <property type="molecule type" value="Genomic_DNA"/>
</dbReference>
<dbReference type="RefSeq" id="NP_647723.2">
    <property type="nucleotide sequence ID" value="NM_139466.5"/>
</dbReference>
<dbReference type="SMR" id="Q9W011"/>
<dbReference type="FunCoup" id="Q9W011">
    <property type="interactions" value="21"/>
</dbReference>
<dbReference type="STRING" id="7227.FBpp0072837"/>
<dbReference type="PaxDb" id="7227-FBpp0072837"/>
<dbReference type="EnsemblMetazoa" id="FBtr0072967">
    <property type="protein sequence ID" value="FBpp0072837"/>
    <property type="gene ID" value="FBgn0035344"/>
</dbReference>
<dbReference type="GeneID" id="38311"/>
<dbReference type="KEGG" id="dme:Dmel_CG16761"/>
<dbReference type="UCSC" id="CG16761-RA">
    <property type="organism name" value="d. melanogaster"/>
</dbReference>
<dbReference type="AGR" id="FB:FBgn0035344"/>
<dbReference type="CTD" id="38311"/>
<dbReference type="FlyBase" id="FBgn0035344">
    <property type="gene designation" value="Cyp4d20"/>
</dbReference>
<dbReference type="VEuPathDB" id="VectorBase:FBgn0035344"/>
<dbReference type="eggNOG" id="KOG0157">
    <property type="taxonomic scope" value="Eukaryota"/>
</dbReference>
<dbReference type="GeneTree" id="ENSGT00940000165700"/>
<dbReference type="HOGENOM" id="CLU_001570_5_1_1"/>
<dbReference type="InParanoid" id="Q9W011"/>
<dbReference type="OMA" id="FMFEGDD"/>
<dbReference type="OrthoDB" id="1470350at2759"/>
<dbReference type="PhylomeDB" id="Q9W011"/>
<dbReference type="Reactome" id="R-DME-193144">
    <property type="pathway name" value="Estrogen biosynthesis"/>
</dbReference>
<dbReference type="Reactome" id="R-DME-211976">
    <property type="pathway name" value="Endogenous sterols"/>
</dbReference>
<dbReference type="BioGRID-ORCS" id="38311">
    <property type="hits" value="0 hits in 3 CRISPR screens"/>
</dbReference>
<dbReference type="GenomeRNAi" id="38311"/>
<dbReference type="PRO" id="PR:Q9W011"/>
<dbReference type="Proteomes" id="UP000000803">
    <property type="component" value="Chromosome 3L"/>
</dbReference>
<dbReference type="Bgee" id="FBgn0035344">
    <property type="expression patterns" value="Expressed in second segment of antenna (Drosophila) and 33 other cell types or tissues"/>
</dbReference>
<dbReference type="ExpressionAtlas" id="Q9W011">
    <property type="expression patterns" value="baseline and differential"/>
</dbReference>
<dbReference type="GO" id="GO:0005789">
    <property type="term" value="C:endoplasmic reticulum membrane"/>
    <property type="evidence" value="ECO:0007669"/>
    <property type="project" value="UniProtKB-SubCell"/>
</dbReference>
<dbReference type="GO" id="GO:0020037">
    <property type="term" value="F:heme binding"/>
    <property type="evidence" value="ECO:0007669"/>
    <property type="project" value="InterPro"/>
</dbReference>
<dbReference type="GO" id="GO:0005506">
    <property type="term" value="F:iron ion binding"/>
    <property type="evidence" value="ECO:0007669"/>
    <property type="project" value="InterPro"/>
</dbReference>
<dbReference type="GO" id="GO:0004497">
    <property type="term" value="F:monooxygenase activity"/>
    <property type="evidence" value="ECO:0007669"/>
    <property type="project" value="UniProtKB-KW"/>
</dbReference>
<dbReference type="GO" id="GO:0016705">
    <property type="term" value="F:oxidoreductase activity, acting on paired donors, with incorporation or reduction of molecular oxygen"/>
    <property type="evidence" value="ECO:0007669"/>
    <property type="project" value="InterPro"/>
</dbReference>
<dbReference type="CDD" id="cd20628">
    <property type="entry name" value="CYP4"/>
    <property type="match status" value="1"/>
</dbReference>
<dbReference type="FunFam" id="1.10.630.10:FF:000182">
    <property type="entry name" value="Cytochrome P450 3A4"/>
    <property type="match status" value="1"/>
</dbReference>
<dbReference type="Gene3D" id="1.10.630.10">
    <property type="entry name" value="Cytochrome P450"/>
    <property type="match status" value="1"/>
</dbReference>
<dbReference type="InterPro" id="IPR001128">
    <property type="entry name" value="Cyt_P450"/>
</dbReference>
<dbReference type="InterPro" id="IPR017972">
    <property type="entry name" value="Cyt_P450_CS"/>
</dbReference>
<dbReference type="InterPro" id="IPR002401">
    <property type="entry name" value="Cyt_P450_E_grp-I"/>
</dbReference>
<dbReference type="InterPro" id="IPR036396">
    <property type="entry name" value="Cyt_P450_sf"/>
</dbReference>
<dbReference type="InterPro" id="IPR050196">
    <property type="entry name" value="Cytochrome_P450_Monoox"/>
</dbReference>
<dbReference type="PANTHER" id="PTHR24291:SF187">
    <property type="entry name" value="CYTOCHROME P450 4AE1-RELATED"/>
    <property type="match status" value="1"/>
</dbReference>
<dbReference type="PANTHER" id="PTHR24291">
    <property type="entry name" value="CYTOCHROME P450 FAMILY 4"/>
    <property type="match status" value="1"/>
</dbReference>
<dbReference type="Pfam" id="PF00067">
    <property type="entry name" value="p450"/>
    <property type="match status" value="1"/>
</dbReference>
<dbReference type="PRINTS" id="PR00463">
    <property type="entry name" value="EP450I"/>
</dbReference>
<dbReference type="PRINTS" id="PR00385">
    <property type="entry name" value="P450"/>
</dbReference>
<dbReference type="SUPFAM" id="SSF48264">
    <property type="entry name" value="Cytochrome P450"/>
    <property type="match status" value="1"/>
</dbReference>
<dbReference type="PROSITE" id="PS00086">
    <property type="entry name" value="CYTOCHROME_P450"/>
    <property type="match status" value="1"/>
</dbReference>
<evidence type="ECO:0000250" key="1"/>
<evidence type="ECO:0000305" key="2"/>
<accession>Q9W011</accession>
<reference key="1">
    <citation type="journal article" date="2000" name="Science">
        <title>The genome sequence of Drosophila melanogaster.</title>
        <authorList>
            <person name="Adams M.D."/>
            <person name="Celniker S.E."/>
            <person name="Holt R.A."/>
            <person name="Evans C.A."/>
            <person name="Gocayne J.D."/>
            <person name="Amanatides P.G."/>
            <person name="Scherer S.E."/>
            <person name="Li P.W."/>
            <person name="Hoskins R.A."/>
            <person name="Galle R.F."/>
            <person name="George R.A."/>
            <person name="Lewis S.E."/>
            <person name="Richards S."/>
            <person name="Ashburner M."/>
            <person name="Henderson S.N."/>
            <person name="Sutton G.G."/>
            <person name="Wortman J.R."/>
            <person name="Yandell M.D."/>
            <person name="Zhang Q."/>
            <person name="Chen L.X."/>
            <person name="Brandon R.C."/>
            <person name="Rogers Y.-H.C."/>
            <person name="Blazej R.G."/>
            <person name="Champe M."/>
            <person name="Pfeiffer B.D."/>
            <person name="Wan K.H."/>
            <person name="Doyle C."/>
            <person name="Baxter E.G."/>
            <person name="Helt G."/>
            <person name="Nelson C.R."/>
            <person name="Miklos G.L.G."/>
            <person name="Abril J.F."/>
            <person name="Agbayani A."/>
            <person name="An H.-J."/>
            <person name="Andrews-Pfannkoch C."/>
            <person name="Baldwin D."/>
            <person name="Ballew R.M."/>
            <person name="Basu A."/>
            <person name="Baxendale J."/>
            <person name="Bayraktaroglu L."/>
            <person name="Beasley E.M."/>
            <person name="Beeson K.Y."/>
            <person name="Benos P.V."/>
            <person name="Berman B.P."/>
            <person name="Bhandari D."/>
            <person name="Bolshakov S."/>
            <person name="Borkova D."/>
            <person name="Botchan M.R."/>
            <person name="Bouck J."/>
            <person name="Brokstein P."/>
            <person name="Brottier P."/>
            <person name="Burtis K.C."/>
            <person name="Busam D.A."/>
            <person name="Butler H."/>
            <person name="Cadieu E."/>
            <person name="Center A."/>
            <person name="Chandra I."/>
            <person name="Cherry J.M."/>
            <person name="Cawley S."/>
            <person name="Dahlke C."/>
            <person name="Davenport L.B."/>
            <person name="Davies P."/>
            <person name="de Pablos B."/>
            <person name="Delcher A."/>
            <person name="Deng Z."/>
            <person name="Mays A.D."/>
            <person name="Dew I."/>
            <person name="Dietz S.M."/>
            <person name="Dodson K."/>
            <person name="Doup L.E."/>
            <person name="Downes M."/>
            <person name="Dugan-Rocha S."/>
            <person name="Dunkov B.C."/>
            <person name="Dunn P."/>
            <person name="Durbin K.J."/>
            <person name="Evangelista C.C."/>
            <person name="Ferraz C."/>
            <person name="Ferriera S."/>
            <person name="Fleischmann W."/>
            <person name="Fosler C."/>
            <person name="Gabrielian A.E."/>
            <person name="Garg N.S."/>
            <person name="Gelbart W.M."/>
            <person name="Glasser K."/>
            <person name="Glodek A."/>
            <person name="Gong F."/>
            <person name="Gorrell J.H."/>
            <person name="Gu Z."/>
            <person name="Guan P."/>
            <person name="Harris M."/>
            <person name="Harris N.L."/>
            <person name="Harvey D.A."/>
            <person name="Heiman T.J."/>
            <person name="Hernandez J.R."/>
            <person name="Houck J."/>
            <person name="Hostin D."/>
            <person name="Houston K.A."/>
            <person name="Howland T.J."/>
            <person name="Wei M.-H."/>
            <person name="Ibegwam C."/>
            <person name="Jalali M."/>
            <person name="Kalush F."/>
            <person name="Karpen G.H."/>
            <person name="Ke Z."/>
            <person name="Kennison J.A."/>
            <person name="Ketchum K.A."/>
            <person name="Kimmel B.E."/>
            <person name="Kodira C.D."/>
            <person name="Kraft C.L."/>
            <person name="Kravitz S."/>
            <person name="Kulp D."/>
            <person name="Lai Z."/>
            <person name="Lasko P."/>
            <person name="Lei Y."/>
            <person name="Levitsky A.A."/>
            <person name="Li J.H."/>
            <person name="Li Z."/>
            <person name="Liang Y."/>
            <person name="Lin X."/>
            <person name="Liu X."/>
            <person name="Mattei B."/>
            <person name="McIntosh T.C."/>
            <person name="McLeod M.P."/>
            <person name="McPherson D."/>
            <person name="Merkulov G."/>
            <person name="Milshina N.V."/>
            <person name="Mobarry C."/>
            <person name="Morris J."/>
            <person name="Moshrefi A."/>
            <person name="Mount S.M."/>
            <person name="Moy M."/>
            <person name="Murphy B."/>
            <person name="Murphy L."/>
            <person name="Muzny D.M."/>
            <person name="Nelson D.L."/>
            <person name="Nelson D.R."/>
            <person name="Nelson K.A."/>
            <person name="Nixon K."/>
            <person name="Nusskern D.R."/>
            <person name="Pacleb J.M."/>
            <person name="Palazzolo M."/>
            <person name="Pittman G.S."/>
            <person name="Pan S."/>
            <person name="Pollard J."/>
            <person name="Puri V."/>
            <person name="Reese M.G."/>
            <person name="Reinert K."/>
            <person name="Remington K."/>
            <person name="Saunders R.D.C."/>
            <person name="Scheeler F."/>
            <person name="Shen H."/>
            <person name="Shue B.C."/>
            <person name="Siden-Kiamos I."/>
            <person name="Simpson M."/>
            <person name="Skupski M.P."/>
            <person name="Smith T.J."/>
            <person name="Spier E."/>
            <person name="Spradling A.C."/>
            <person name="Stapleton M."/>
            <person name="Strong R."/>
            <person name="Sun E."/>
            <person name="Svirskas R."/>
            <person name="Tector C."/>
            <person name="Turner R."/>
            <person name="Venter E."/>
            <person name="Wang A.H."/>
            <person name="Wang X."/>
            <person name="Wang Z.-Y."/>
            <person name="Wassarman D.A."/>
            <person name="Weinstock G.M."/>
            <person name="Weissenbach J."/>
            <person name="Williams S.M."/>
            <person name="Woodage T."/>
            <person name="Worley K.C."/>
            <person name="Wu D."/>
            <person name="Yang S."/>
            <person name="Yao Q.A."/>
            <person name="Ye J."/>
            <person name="Yeh R.-F."/>
            <person name="Zaveri J.S."/>
            <person name="Zhan M."/>
            <person name="Zhang G."/>
            <person name="Zhao Q."/>
            <person name="Zheng L."/>
            <person name="Zheng X.H."/>
            <person name="Zhong F.N."/>
            <person name="Zhong W."/>
            <person name="Zhou X."/>
            <person name="Zhu S.C."/>
            <person name="Zhu X."/>
            <person name="Smith H.O."/>
            <person name="Gibbs R.A."/>
            <person name="Myers E.W."/>
            <person name="Rubin G.M."/>
            <person name="Venter J.C."/>
        </authorList>
    </citation>
    <scope>NUCLEOTIDE SEQUENCE [LARGE SCALE GENOMIC DNA]</scope>
    <source>
        <strain>Berkeley</strain>
    </source>
</reference>
<reference key="2">
    <citation type="journal article" date="2002" name="Genome Biol.">
        <title>Annotation of the Drosophila melanogaster euchromatic genome: a systematic review.</title>
        <authorList>
            <person name="Misra S."/>
            <person name="Crosby M.A."/>
            <person name="Mungall C.J."/>
            <person name="Matthews B.B."/>
            <person name="Campbell K.S."/>
            <person name="Hradecky P."/>
            <person name="Huang Y."/>
            <person name="Kaminker J.S."/>
            <person name="Millburn G.H."/>
            <person name="Prochnik S.E."/>
            <person name="Smith C.D."/>
            <person name="Tupy J.L."/>
            <person name="Whitfield E.J."/>
            <person name="Bayraktaroglu L."/>
            <person name="Berman B.P."/>
            <person name="Bettencourt B.R."/>
            <person name="Celniker S.E."/>
            <person name="de Grey A.D.N.J."/>
            <person name="Drysdale R.A."/>
            <person name="Harris N.L."/>
            <person name="Richter J."/>
            <person name="Russo S."/>
            <person name="Schroeder A.J."/>
            <person name="Shu S.Q."/>
            <person name="Stapleton M."/>
            <person name="Yamada C."/>
            <person name="Ashburner M."/>
            <person name="Gelbart W.M."/>
            <person name="Rubin G.M."/>
            <person name="Lewis S.E."/>
        </authorList>
    </citation>
    <scope>GENOME REANNOTATION</scope>
    <source>
        <strain>Berkeley</strain>
    </source>
</reference>